<keyword id="KW-1185">Reference proteome</keyword>
<organism>
    <name type="scientific">Thermoproteus tenax virus 1 (strain KRA1)</name>
    <name type="common">TTV1</name>
    <dbReference type="NCBI Taxonomy" id="10480"/>
    <lineage>
        <taxon>Viruses</taxon>
        <taxon>Adnaviria</taxon>
        <taxon>Zilligvirae</taxon>
        <taxon>Taleaviricota</taxon>
        <taxon>Tokiviricetes</taxon>
        <taxon>Primavirales</taxon>
        <taxon>Tristromaviridae</taxon>
        <taxon>Betatristromavirus</taxon>
        <taxon>Betatristromavirus TTV1</taxon>
    </lineage>
</organism>
<protein>
    <recommendedName>
        <fullName>Uncharacterized 16.6 kDa protein</fullName>
    </recommendedName>
</protein>
<organismHost>
    <name type="scientific">Thermoproteus tenax</name>
    <dbReference type="NCBI Taxonomy" id="2271"/>
</organismHost>
<sequence>MKYKFAIGFFISPSEFLLYNDYKKIRTIYNTVRVGGIDREVRVGIAHFMEGEYRIYIEGIPITVYRGDKTSASIYMSWGNWISMYNLSLERFLWAYNAKAIVIRPTGFKRGEGCLRRVLDEIDAGVYSGGRLLKPTIVQLREE</sequence>
<dbReference type="EMBL" id="X14855">
    <property type="protein sequence ID" value="CAA32986.1"/>
    <property type="molecule type" value="Genomic_DNA"/>
</dbReference>
<dbReference type="Proteomes" id="UP000009250">
    <property type="component" value="Genome"/>
</dbReference>
<reference key="1">
    <citation type="submission" date="1989-03" db="EMBL/GenBank/DDBJ databases">
        <authorList>
            <person name="Neumann H."/>
        </authorList>
    </citation>
    <scope>NUCLEOTIDE SEQUENCE [GENOMIC DNA]</scope>
</reference>
<accession>P19292</accession>
<feature type="chain" id="PRO_0000222974" description="Uncharacterized 16.6 kDa protein">
    <location>
        <begin position="1"/>
        <end position="143"/>
    </location>
</feature>
<name>YORH_TTV1K</name>
<proteinExistence type="predicted"/>